<keyword id="KW-0066">ATP synthesis</keyword>
<keyword id="KW-0138">CF(0)</keyword>
<keyword id="KW-0375">Hydrogen ion transport</keyword>
<keyword id="KW-0406">Ion transport</keyword>
<keyword id="KW-0472">Membrane</keyword>
<keyword id="KW-0614">Plasmid</keyword>
<keyword id="KW-1185">Reference proteome</keyword>
<keyword id="KW-0793">Thylakoid</keyword>
<keyword id="KW-0812">Transmembrane</keyword>
<keyword id="KW-1133">Transmembrane helix</keyword>
<keyword id="KW-0813">Transport</keyword>
<geneLocation type="plasmid">
    <name>pAQ7</name>
</geneLocation>
<organism>
    <name type="scientific">Picosynechococcus sp. (strain ATCC 27264 / PCC 7002 / PR-6)</name>
    <name type="common">Agmenellum quadruplicatum</name>
    <dbReference type="NCBI Taxonomy" id="32049"/>
    <lineage>
        <taxon>Bacteria</taxon>
        <taxon>Bacillati</taxon>
        <taxon>Cyanobacteriota</taxon>
        <taxon>Cyanophyceae</taxon>
        <taxon>Oscillatoriophycideae</taxon>
        <taxon>Chroococcales</taxon>
        <taxon>Geminocystaceae</taxon>
        <taxon>Picosynechococcus</taxon>
    </lineage>
</organism>
<gene>
    <name evidence="1 2" type="primary">atpF3</name>
    <name type="ordered locus">SYNPCC7002_G0150</name>
</gene>
<protein>
    <recommendedName>
        <fullName evidence="1">ATP synthase subunit b 2</fullName>
    </recommendedName>
    <alternativeName>
        <fullName evidence="1">ATP synthase F(0) sector subunit b 2</fullName>
    </alternativeName>
    <alternativeName>
        <fullName evidence="1">ATPase subunit I 2</fullName>
    </alternativeName>
    <alternativeName>
        <fullName evidence="1">F-type ATPase subunit b 2</fullName>
        <shortName evidence="1">F-ATPase subunit b 2</shortName>
    </alternativeName>
</protein>
<dbReference type="EMBL" id="CP000957">
    <property type="protein sequence ID" value="ACB01190.1"/>
    <property type="molecule type" value="Genomic_DNA"/>
</dbReference>
<dbReference type="RefSeq" id="WP_012305627.1">
    <property type="nucleotide sequence ID" value="NZ_JAHHPU010000008.1"/>
</dbReference>
<dbReference type="SMR" id="B1XRK5"/>
<dbReference type="KEGG" id="syp:SYNPCC7002_G0150"/>
<dbReference type="HOGENOM" id="CLU_070737_0_0_3"/>
<dbReference type="Proteomes" id="UP000001688">
    <property type="component" value="Plasmid pAQ7"/>
</dbReference>
<dbReference type="GO" id="GO:0031676">
    <property type="term" value="C:plasma membrane-derived thylakoid membrane"/>
    <property type="evidence" value="ECO:0007669"/>
    <property type="project" value="UniProtKB-SubCell"/>
</dbReference>
<dbReference type="GO" id="GO:0045259">
    <property type="term" value="C:proton-transporting ATP synthase complex"/>
    <property type="evidence" value="ECO:0007669"/>
    <property type="project" value="UniProtKB-KW"/>
</dbReference>
<dbReference type="GO" id="GO:0046933">
    <property type="term" value="F:proton-transporting ATP synthase activity, rotational mechanism"/>
    <property type="evidence" value="ECO:0007669"/>
    <property type="project" value="UniProtKB-UniRule"/>
</dbReference>
<dbReference type="GO" id="GO:0046961">
    <property type="term" value="F:proton-transporting ATPase activity, rotational mechanism"/>
    <property type="evidence" value="ECO:0007669"/>
    <property type="project" value="TreeGrafter"/>
</dbReference>
<dbReference type="CDD" id="cd06503">
    <property type="entry name" value="ATP-synt_Fo_b"/>
    <property type="match status" value="1"/>
</dbReference>
<dbReference type="HAMAP" id="MF_01398">
    <property type="entry name" value="ATP_synth_b_bprime"/>
    <property type="match status" value="1"/>
</dbReference>
<dbReference type="InterPro" id="IPR002146">
    <property type="entry name" value="ATP_synth_b/b'su_bac/chlpt"/>
</dbReference>
<dbReference type="InterPro" id="IPR050059">
    <property type="entry name" value="ATP_synthase_B_chain"/>
</dbReference>
<dbReference type="NCBIfam" id="NF011044">
    <property type="entry name" value="PRK14474.1"/>
    <property type="match status" value="1"/>
</dbReference>
<dbReference type="PANTHER" id="PTHR33445">
    <property type="entry name" value="ATP SYNTHASE SUBUNIT B', CHLOROPLASTIC"/>
    <property type="match status" value="1"/>
</dbReference>
<dbReference type="PANTHER" id="PTHR33445:SF2">
    <property type="entry name" value="ATP SYNTHASE SUBUNIT B', CHLOROPLASTIC"/>
    <property type="match status" value="1"/>
</dbReference>
<dbReference type="Pfam" id="PF00430">
    <property type="entry name" value="ATP-synt_B"/>
    <property type="match status" value="1"/>
</dbReference>
<reference key="1">
    <citation type="submission" date="2008-02" db="EMBL/GenBank/DDBJ databases">
        <title>Complete sequence of Synechococcus sp. PCC 7002.</title>
        <authorList>
            <person name="Li T."/>
            <person name="Zhao J."/>
            <person name="Zhao C."/>
            <person name="Liu Z."/>
            <person name="Zhao F."/>
            <person name="Marquardt J."/>
            <person name="Nomura C.T."/>
            <person name="Persson S."/>
            <person name="Detter J.C."/>
            <person name="Richardson P.M."/>
            <person name="Lanz C."/>
            <person name="Schuster S.C."/>
            <person name="Wang J."/>
            <person name="Li S."/>
            <person name="Huang X."/>
            <person name="Cai T."/>
            <person name="Yu Z."/>
            <person name="Luo J."/>
            <person name="Zhao J."/>
            <person name="Bryant D.A."/>
        </authorList>
    </citation>
    <scope>NUCLEOTIDE SEQUENCE [LARGE SCALE GENOMIC DNA]</scope>
    <source>
        <strain>ATCC 27264 / PCC 7002 / PR-6</strain>
    </source>
</reference>
<evidence type="ECO:0000255" key="1">
    <source>
        <dbReference type="HAMAP-Rule" id="MF_01398"/>
    </source>
</evidence>
<evidence type="ECO:0000305" key="2"/>
<sequence>MLIDWFTVFAQILNFVILLGLLRWFLYKPILQVMAKRQAQLAEQWQTATDLQAQAHQALEQYHQEQQSLQAQRASFLAAARAAADEERQRQLLTLREDIQAQREAWEADLHQEQRAFFHTLRQQVSQQVVAIARQALRDLANATLEQQVVARFCEQLQHLSPAQRQQINHLETPPEAVFIRTAFPLDVTHQAQIKQSLATTLELDGTPIHFVTVPELGCGIELKLAGQEIVWGLDPYLDQLEQTLAIATR</sequence>
<comment type="function">
    <text evidence="1">F(1)F(0) ATP synthase produces ATP from ADP in the presence of a proton or sodium gradient. F-type ATPases consist of two structural domains, F(1) containing the extramembraneous catalytic core and F(0) containing the membrane proton channel, linked together by a central stalk and a peripheral stalk. During catalysis, ATP synthesis in the catalytic domain of F(1) is coupled via a rotary mechanism of the central stalk subunits to proton translocation.</text>
</comment>
<comment type="function">
    <text evidence="1">Component of the F(0) channel, it forms part of the peripheral stalk, linking F(1) to F(0).</text>
</comment>
<comment type="subunit">
    <text evidence="1">F-type ATPases have 2 components, F(1) - the catalytic core - and F(0) - the membrane proton channel. F(1) has five subunits: alpha(3), beta(3), gamma(1), delta(1), epsilon(1). F(0) has four main subunits: a(1), b(1), b'(1) and c(10-14). The alpha and beta chains form an alternating ring which encloses part of the gamma chain. F(1) is attached to F(0) by a central stalk formed by the gamma and epsilon chains, while a peripheral stalk is formed by the delta, b and b' chains.</text>
</comment>
<comment type="subcellular location">
    <subcellularLocation>
        <location evidence="1">Cellular thylakoid membrane</location>
        <topology evidence="1">Single-pass membrane protein</topology>
    </subcellularLocation>
</comment>
<comment type="similarity">
    <text evidence="1">Belongs to the ATPase B chain family.</text>
</comment>
<name>ATPF3_PICP2</name>
<feature type="chain" id="PRO_0000368825" description="ATP synthase subunit b 2">
    <location>
        <begin position="1"/>
        <end position="250"/>
    </location>
</feature>
<feature type="transmembrane region" description="Helical" evidence="1">
    <location>
        <begin position="2"/>
        <end position="22"/>
    </location>
</feature>
<accession>B1XRK5</accession>
<proteinExistence type="inferred from homology"/>